<comment type="function">
    <text evidence="1">Cell wall formation. Catalyzes the transfer of a GlcNAc subunit on undecaprenyl-pyrophosphoryl-MurNAc-pentapeptide (lipid intermediate I) to form undecaprenyl-pyrophosphoryl-MurNAc-(pentapeptide)GlcNAc (lipid intermediate II).</text>
</comment>
<comment type="catalytic activity">
    <reaction evidence="1">
        <text>di-trans,octa-cis-undecaprenyl diphospho-N-acetyl-alpha-D-muramoyl-L-alanyl-D-glutamyl-meso-2,6-diaminopimeloyl-D-alanyl-D-alanine + UDP-N-acetyl-alpha-D-glucosamine = di-trans,octa-cis-undecaprenyl diphospho-[N-acetyl-alpha-D-glucosaminyl-(1-&gt;4)]-N-acetyl-alpha-D-muramoyl-L-alanyl-D-glutamyl-meso-2,6-diaminopimeloyl-D-alanyl-D-alanine + UDP + H(+)</text>
        <dbReference type="Rhea" id="RHEA:31227"/>
        <dbReference type="ChEBI" id="CHEBI:15378"/>
        <dbReference type="ChEBI" id="CHEBI:57705"/>
        <dbReference type="ChEBI" id="CHEBI:58223"/>
        <dbReference type="ChEBI" id="CHEBI:61387"/>
        <dbReference type="ChEBI" id="CHEBI:61388"/>
        <dbReference type="EC" id="2.4.1.227"/>
    </reaction>
</comment>
<comment type="pathway">
    <text evidence="1">Cell wall biogenesis; peptidoglycan biosynthesis.</text>
</comment>
<comment type="subcellular location">
    <subcellularLocation>
        <location evidence="1">Cell membrane</location>
        <topology evidence="1">Peripheral membrane protein</topology>
        <orientation evidence="1">Cytoplasmic side</orientation>
    </subcellularLocation>
</comment>
<comment type="similarity">
    <text evidence="1">Belongs to the glycosyltransferase 28 family. MurG subfamily.</text>
</comment>
<proteinExistence type="inferred from homology"/>
<evidence type="ECO:0000255" key="1">
    <source>
        <dbReference type="HAMAP-Rule" id="MF_00033"/>
    </source>
</evidence>
<reference key="1">
    <citation type="journal article" date="2000" name="Nucleic Acids Res.">
        <title>Complete genome sequence of the alkaliphilic bacterium Bacillus halodurans and genomic sequence comparison with Bacillus subtilis.</title>
        <authorList>
            <person name="Takami H."/>
            <person name="Nakasone K."/>
            <person name="Takaki Y."/>
            <person name="Maeno G."/>
            <person name="Sasaki R."/>
            <person name="Masui N."/>
            <person name="Fuji F."/>
            <person name="Hirama C."/>
            <person name="Nakamura Y."/>
            <person name="Ogasawara N."/>
            <person name="Kuhara S."/>
            <person name="Horikoshi K."/>
        </authorList>
    </citation>
    <scope>NUCLEOTIDE SEQUENCE [LARGE SCALE GENOMIC DNA]</scope>
    <source>
        <strain>ATCC BAA-125 / DSM 18197 / FERM 7344 / JCM 9153 / C-125</strain>
    </source>
</reference>
<feature type="chain" id="PRO_0000109142" description="UDP-N-acetylglucosamine--N-acetylmuramyl-(pentapeptide) pyrophosphoryl-undecaprenol N-acetylglucosamine transferase">
    <location>
        <begin position="1"/>
        <end position="363"/>
    </location>
</feature>
<feature type="binding site" evidence="1">
    <location>
        <begin position="10"/>
        <end position="12"/>
    </location>
    <ligand>
        <name>UDP-N-acetyl-alpha-D-glucosamine</name>
        <dbReference type="ChEBI" id="CHEBI:57705"/>
    </ligand>
</feature>
<feature type="binding site" evidence="1">
    <location>
        <position position="124"/>
    </location>
    <ligand>
        <name>UDP-N-acetyl-alpha-D-glucosamine</name>
        <dbReference type="ChEBI" id="CHEBI:57705"/>
    </ligand>
</feature>
<feature type="binding site" evidence="1">
    <location>
        <position position="195"/>
    </location>
    <ligand>
        <name>UDP-N-acetyl-alpha-D-glucosamine</name>
        <dbReference type="ChEBI" id="CHEBI:57705"/>
    </ligand>
</feature>
<feature type="binding site" evidence="1">
    <location>
        <position position="250"/>
    </location>
    <ligand>
        <name>UDP-N-acetyl-alpha-D-glucosamine</name>
        <dbReference type="ChEBI" id="CHEBI:57705"/>
    </ligand>
</feature>
<feature type="binding site" evidence="1">
    <location>
        <position position="295"/>
    </location>
    <ligand>
        <name>UDP-N-acetyl-alpha-D-glucosamine</name>
        <dbReference type="ChEBI" id="CHEBI:57705"/>
    </ligand>
</feature>
<name>MURG_HALH5</name>
<keyword id="KW-0131">Cell cycle</keyword>
<keyword id="KW-0132">Cell division</keyword>
<keyword id="KW-1003">Cell membrane</keyword>
<keyword id="KW-0133">Cell shape</keyword>
<keyword id="KW-0961">Cell wall biogenesis/degradation</keyword>
<keyword id="KW-0328">Glycosyltransferase</keyword>
<keyword id="KW-0472">Membrane</keyword>
<keyword id="KW-0573">Peptidoglycan synthesis</keyword>
<keyword id="KW-1185">Reference proteome</keyword>
<keyword id="KW-0808">Transferase</keyword>
<sequence length="363" mass="39715">MKIVVSGGGTGGHIYPALAFINEMKKRDERLDVLYIGTERGLESEIVPREGIPFQTIHITGFQRKLSMENVKTVVRFLRGTKRAKALLNEFKPDVVIGTGGYVCGPVVYAAAKLKIPTVIHEQNSVPGLTNKFLSRYVDRIAICFKEAEAFFPKNKVVFTGNPRASEVMSGNREEGLRSLGIKPNKKTVLIVGGSRGARPINDAFMSILSDVKAKPYQFVYVTGTVHYERVQEQMKSIGQPENVIVQPFIHNMPDVLSAVDLIVARAGATTLAEITALGLPSILIPSPYVTNNHQEKNAAALSKKDAAILRKESELTGDRLLEDIDDIMVTPGRLDAMKQAAKALGVPTAAEKLHMLVKEVAK</sequence>
<organism>
    <name type="scientific">Halalkalibacterium halodurans (strain ATCC BAA-125 / DSM 18197 / FERM 7344 / JCM 9153 / C-125)</name>
    <name type="common">Bacillus halodurans</name>
    <dbReference type="NCBI Taxonomy" id="272558"/>
    <lineage>
        <taxon>Bacteria</taxon>
        <taxon>Bacillati</taxon>
        <taxon>Bacillota</taxon>
        <taxon>Bacilli</taxon>
        <taxon>Bacillales</taxon>
        <taxon>Bacillaceae</taxon>
        <taxon>Halalkalibacterium (ex Joshi et al. 2022)</taxon>
    </lineage>
</organism>
<protein>
    <recommendedName>
        <fullName evidence="1">UDP-N-acetylglucosamine--N-acetylmuramyl-(pentapeptide) pyrophosphoryl-undecaprenol N-acetylglucosamine transferase</fullName>
        <ecNumber evidence="1">2.4.1.227</ecNumber>
    </recommendedName>
    <alternativeName>
        <fullName evidence="1">Undecaprenyl-PP-MurNAc-pentapeptide-UDPGlcNAc GlcNAc transferase</fullName>
    </alternativeName>
</protein>
<accession>Q9K9T0</accession>
<gene>
    <name evidence="1" type="primary">murG</name>
    <name type="ordered locus">BH2565</name>
</gene>
<dbReference type="EC" id="2.4.1.227" evidence="1"/>
<dbReference type="EMBL" id="BA000004">
    <property type="protein sequence ID" value="BAB06284.1"/>
    <property type="molecule type" value="Genomic_DNA"/>
</dbReference>
<dbReference type="PIR" id="E83970">
    <property type="entry name" value="E83970"/>
</dbReference>
<dbReference type="RefSeq" id="WP_010898716.1">
    <property type="nucleotide sequence ID" value="NC_002570.2"/>
</dbReference>
<dbReference type="SMR" id="Q9K9T0"/>
<dbReference type="STRING" id="272558.gene:10728463"/>
<dbReference type="CAZy" id="GT28">
    <property type="family name" value="Glycosyltransferase Family 28"/>
</dbReference>
<dbReference type="KEGG" id="bha:BH2565"/>
<dbReference type="eggNOG" id="COG0707">
    <property type="taxonomic scope" value="Bacteria"/>
</dbReference>
<dbReference type="HOGENOM" id="CLU_037404_0_1_9"/>
<dbReference type="OrthoDB" id="9808936at2"/>
<dbReference type="UniPathway" id="UPA00219"/>
<dbReference type="Proteomes" id="UP000001258">
    <property type="component" value="Chromosome"/>
</dbReference>
<dbReference type="GO" id="GO:0005886">
    <property type="term" value="C:plasma membrane"/>
    <property type="evidence" value="ECO:0007669"/>
    <property type="project" value="UniProtKB-SubCell"/>
</dbReference>
<dbReference type="GO" id="GO:0051991">
    <property type="term" value="F:UDP-N-acetyl-D-glucosamine:N-acetylmuramoyl-L-alanyl-D-glutamyl-meso-2,6-diaminopimelyl-D-alanyl-D-alanine-diphosphoundecaprenol 4-beta-N-acetylglucosaminlytransferase activity"/>
    <property type="evidence" value="ECO:0007669"/>
    <property type="project" value="RHEA"/>
</dbReference>
<dbReference type="GO" id="GO:0050511">
    <property type="term" value="F:undecaprenyldiphospho-muramoylpentapeptide beta-N-acetylglucosaminyltransferase activity"/>
    <property type="evidence" value="ECO:0007669"/>
    <property type="project" value="UniProtKB-UniRule"/>
</dbReference>
<dbReference type="GO" id="GO:0005975">
    <property type="term" value="P:carbohydrate metabolic process"/>
    <property type="evidence" value="ECO:0007669"/>
    <property type="project" value="InterPro"/>
</dbReference>
<dbReference type="GO" id="GO:0051301">
    <property type="term" value="P:cell division"/>
    <property type="evidence" value="ECO:0007669"/>
    <property type="project" value="UniProtKB-KW"/>
</dbReference>
<dbReference type="GO" id="GO:0071555">
    <property type="term" value="P:cell wall organization"/>
    <property type="evidence" value="ECO:0007669"/>
    <property type="project" value="UniProtKB-KW"/>
</dbReference>
<dbReference type="GO" id="GO:0030259">
    <property type="term" value="P:lipid glycosylation"/>
    <property type="evidence" value="ECO:0007669"/>
    <property type="project" value="UniProtKB-UniRule"/>
</dbReference>
<dbReference type="GO" id="GO:0009252">
    <property type="term" value="P:peptidoglycan biosynthetic process"/>
    <property type="evidence" value="ECO:0007669"/>
    <property type="project" value="UniProtKB-UniRule"/>
</dbReference>
<dbReference type="GO" id="GO:0008360">
    <property type="term" value="P:regulation of cell shape"/>
    <property type="evidence" value="ECO:0007669"/>
    <property type="project" value="UniProtKB-KW"/>
</dbReference>
<dbReference type="CDD" id="cd03785">
    <property type="entry name" value="GT28_MurG"/>
    <property type="match status" value="1"/>
</dbReference>
<dbReference type="Gene3D" id="3.40.50.2000">
    <property type="entry name" value="Glycogen Phosphorylase B"/>
    <property type="match status" value="2"/>
</dbReference>
<dbReference type="HAMAP" id="MF_00033">
    <property type="entry name" value="MurG"/>
    <property type="match status" value="1"/>
</dbReference>
<dbReference type="InterPro" id="IPR006009">
    <property type="entry name" value="GlcNAc_MurG"/>
</dbReference>
<dbReference type="InterPro" id="IPR007235">
    <property type="entry name" value="Glyco_trans_28_C"/>
</dbReference>
<dbReference type="InterPro" id="IPR004276">
    <property type="entry name" value="GlycoTrans_28_N"/>
</dbReference>
<dbReference type="NCBIfam" id="TIGR01133">
    <property type="entry name" value="murG"/>
    <property type="match status" value="1"/>
</dbReference>
<dbReference type="PANTHER" id="PTHR21015:SF22">
    <property type="entry name" value="GLYCOSYLTRANSFERASE"/>
    <property type="match status" value="1"/>
</dbReference>
<dbReference type="PANTHER" id="PTHR21015">
    <property type="entry name" value="UDP-N-ACETYLGLUCOSAMINE--N-ACETYLMURAMYL-(PENTAPEPTIDE) PYROPHOSPHORYL-UNDECAPRENOL N-ACETYLGLUCOSAMINE TRANSFERASE 1"/>
    <property type="match status" value="1"/>
</dbReference>
<dbReference type="Pfam" id="PF04101">
    <property type="entry name" value="Glyco_tran_28_C"/>
    <property type="match status" value="1"/>
</dbReference>
<dbReference type="Pfam" id="PF03033">
    <property type="entry name" value="Glyco_transf_28"/>
    <property type="match status" value="1"/>
</dbReference>
<dbReference type="SUPFAM" id="SSF53756">
    <property type="entry name" value="UDP-Glycosyltransferase/glycogen phosphorylase"/>
    <property type="match status" value="1"/>
</dbReference>